<feature type="chain" id="PRO_0000208395" description="Acetyl-coenzyme A synthetase">
    <location>
        <begin position="1"/>
        <end position="650"/>
    </location>
</feature>
<feature type="binding site" evidence="1">
    <location>
        <begin position="191"/>
        <end position="194"/>
    </location>
    <ligand>
        <name>CoA</name>
        <dbReference type="ChEBI" id="CHEBI:57287"/>
    </ligand>
</feature>
<feature type="binding site" evidence="1">
    <location>
        <position position="311"/>
    </location>
    <ligand>
        <name>CoA</name>
        <dbReference type="ChEBI" id="CHEBI:57287"/>
    </ligand>
</feature>
<feature type="binding site" evidence="1">
    <location>
        <position position="335"/>
    </location>
    <ligand>
        <name>CoA</name>
        <dbReference type="ChEBI" id="CHEBI:57287"/>
    </ligand>
</feature>
<feature type="binding site" evidence="1">
    <location>
        <begin position="387"/>
        <end position="389"/>
    </location>
    <ligand>
        <name>ATP</name>
        <dbReference type="ChEBI" id="CHEBI:30616"/>
    </ligand>
</feature>
<feature type="binding site" evidence="1">
    <location>
        <begin position="411"/>
        <end position="416"/>
    </location>
    <ligand>
        <name>ATP</name>
        <dbReference type="ChEBI" id="CHEBI:30616"/>
    </ligand>
</feature>
<feature type="binding site" evidence="1">
    <location>
        <position position="501"/>
    </location>
    <ligand>
        <name>ATP</name>
        <dbReference type="ChEBI" id="CHEBI:30616"/>
    </ligand>
</feature>
<feature type="binding site" evidence="1">
    <location>
        <position position="516"/>
    </location>
    <ligand>
        <name>ATP</name>
        <dbReference type="ChEBI" id="CHEBI:30616"/>
    </ligand>
</feature>
<feature type="binding site" evidence="1">
    <location>
        <position position="524"/>
    </location>
    <ligand>
        <name>CoA</name>
        <dbReference type="ChEBI" id="CHEBI:57287"/>
    </ligand>
</feature>
<feature type="binding site" evidence="1">
    <location>
        <position position="527"/>
    </location>
    <ligand>
        <name>ATP</name>
        <dbReference type="ChEBI" id="CHEBI:30616"/>
    </ligand>
</feature>
<feature type="binding site" evidence="1">
    <location>
        <position position="538"/>
    </location>
    <ligand>
        <name>Mg(2+)</name>
        <dbReference type="ChEBI" id="CHEBI:18420"/>
    </ligand>
</feature>
<feature type="binding site" evidence="1">
    <location>
        <position position="540"/>
    </location>
    <ligand>
        <name>Mg(2+)</name>
        <dbReference type="ChEBI" id="CHEBI:18420"/>
    </ligand>
</feature>
<feature type="binding site" evidence="1">
    <location>
        <position position="543"/>
    </location>
    <ligand>
        <name>Mg(2+)</name>
        <dbReference type="ChEBI" id="CHEBI:18420"/>
    </ligand>
</feature>
<feature type="binding site" evidence="1">
    <location>
        <position position="585"/>
    </location>
    <ligand>
        <name>CoA</name>
        <dbReference type="ChEBI" id="CHEBI:57287"/>
    </ligand>
</feature>
<feature type="modified residue" description="N6-acetyllysine" evidence="1">
    <location>
        <position position="610"/>
    </location>
</feature>
<reference key="1">
    <citation type="journal article" date="2003" name="Genome Res.">
        <title>Comparative genome analysis of Vibrio vulnificus, a marine pathogen.</title>
        <authorList>
            <person name="Chen C.-Y."/>
            <person name="Wu K.-M."/>
            <person name="Chang Y.-C."/>
            <person name="Chang C.-H."/>
            <person name="Tsai H.-C."/>
            <person name="Liao T.-L."/>
            <person name="Liu Y.-M."/>
            <person name="Chen H.-J."/>
            <person name="Shen A.B.-T."/>
            <person name="Li J.-C."/>
            <person name="Su T.-L."/>
            <person name="Shao C.-P."/>
            <person name="Lee C.-T."/>
            <person name="Hor L.-I."/>
            <person name="Tsai S.-F."/>
        </authorList>
    </citation>
    <scope>NUCLEOTIDE SEQUENCE [LARGE SCALE GENOMIC DNA]</scope>
    <source>
        <strain>YJ016</strain>
    </source>
</reference>
<comment type="function">
    <text evidence="1">Catalyzes the conversion of acetate into acetyl-CoA (AcCoA), an essential intermediate at the junction of anabolic and catabolic pathways. AcsA undergoes a two-step reaction. In the first half reaction, AcsA combines acetate with ATP to form acetyl-adenylate (AcAMP) intermediate. In the second half reaction, it can then transfer the acetyl group from AcAMP to the sulfhydryl group of CoA, forming the product AcCoA.</text>
</comment>
<comment type="catalytic activity">
    <reaction evidence="1">
        <text>acetate + ATP + CoA = acetyl-CoA + AMP + diphosphate</text>
        <dbReference type="Rhea" id="RHEA:23176"/>
        <dbReference type="ChEBI" id="CHEBI:30089"/>
        <dbReference type="ChEBI" id="CHEBI:30616"/>
        <dbReference type="ChEBI" id="CHEBI:33019"/>
        <dbReference type="ChEBI" id="CHEBI:57287"/>
        <dbReference type="ChEBI" id="CHEBI:57288"/>
        <dbReference type="ChEBI" id="CHEBI:456215"/>
        <dbReference type="EC" id="6.2.1.1"/>
    </reaction>
</comment>
<comment type="cofactor">
    <cofactor evidence="1">
        <name>Mg(2+)</name>
        <dbReference type="ChEBI" id="CHEBI:18420"/>
    </cofactor>
</comment>
<comment type="PTM">
    <text evidence="1">Acetylated. Deacetylation by the SIR2-homolog deacetylase activates the enzyme.</text>
</comment>
<comment type="similarity">
    <text evidence="1">Belongs to the ATP-dependent AMP-binding enzyme family.</text>
</comment>
<comment type="sequence caution" evidence="2">
    <conflict type="erroneous initiation">
        <sequence resource="EMBL-CDS" id="BAC95897"/>
    </conflict>
    <text>Extended N-terminus.</text>
</comment>
<name>ACSA_VIBVY</name>
<evidence type="ECO:0000255" key="1">
    <source>
        <dbReference type="HAMAP-Rule" id="MF_01123"/>
    </source>
</evidence>
<evidence type="ECO:0000305" key="2"/>
<protein>
    <recommendedName>
        <fullName evidence="1">Acetyl-coenzyme A synthetase</fullName>
        <shortName evidence="1">AcCoA synthetase</shortName>
        <shortName evidence="1">Acs</shortName>
        <ecNumber evidence="1">6.2.1.1</ecNumber>
    </recommendedName>
    <alternativeName>
        <fullName evidence="1">Acetate--CoA ligase</fullName>
    </alternativeName>
    <alternativeName>
        <fullName evidence="1">Acyl-activating enzyme</fullName>
    </alternativeName>
</protein>
<dbReference type="EC" id="6.2.1.1" evidence="1"/>
<dbReference type="EMBL" id="BA000037">
    <property type="protein sequence ID" value="BAC95897.1"/>
    <property type="status" value="ALT_INIT"/>
    <property type="molecule type" value="Genomic_DNA"/>
</dbReference>
<dbReference type="SMR" id="Q7MGU3"/>
<dbReference type="STRING" id="672.VV93_v1c28510"/>
<dbReference type="KEGG" id="vvy:VV3133"/>
<dbReference type="eggNOG" id="COG0365">
    <property type="taxonomic scope" value="Bacteria"/>
</dbReference>
<dbReference type="HOGENOM" id="CLU_000022_3_6_6"/>
<dbReference type="Proteomes" id="UP000002675">
    <property type="component" value="Chromosome I"/>
</dbReference>
<dbReference type="GO" id="GO:0005829">
    <property type="term" value="C:cytosol"/>
    <property type="evidence" value="ECO:0007669"/>
    <property type="project" value="TreeGrafter"/>
</dbReference>
<dbReference type="GO" id="GO:0003987">
    <property type="term" value="F:acetate-CoA ligase activity"/>
    <property type="evidence" value="ECO:0007669"/>
    <property type="project" value="UniProtKB-UniRule"/>
</dbReference>
<dbReference type="GO" id="GO:0016208">
    <property type="term" value="F:AMP binding"/>
    <property type="evidence" value="ECO:0007669"/>
    <property type="project" value="InterPro"/>
</dbReference>
<dbReference type="GO" id="GO:0005524">
    <property type="term" value="F:ATP binding"/>
    <property type="evidence" value="ECO:0007669"/>
    <property type="project" value="UniProtKB-KW"/>
</dbReference>
<dbReference type="GO" id="GO:0046872">
    <property type="term" value="F:metal ion binding"/>
    <property type="evidence" value="ECO:0007669"/>
    <property type="project" value="UniProtKB-KW"/>
</dbReference>
<dbReference type="GO" id="GO:0019427">
    <property type="term" value="P:acetyl-CoA biosynthetic process from acetate"/>
    <property type="evidence" value="ECO:0007669"/>
    <property type="project" value="InterPro"/>
</dbReference>
<dbReference type="CDD" id="cd05966">
    <property type="entry name" value="ACS"/>
    <property type="match status" value="1"/>
</dbReference>
<dbReference type="FunFam" id="3.30.300.30:FF:000004">
    <property type="entry name" value="Acetyl-coenzyme A synthetase"/>
    <property type="match status" value="1"/>
</dbReference>
<dbReference type="FunFam" id="3.40.50.12780:FF:000001">
    <property type="entry name" value="Acetyl-coenzyme A synthetase"/>
    <property type="match status" value="1"/>
</dbReference>
<dbReference type="Gene3D" id="3.30.300.30">
    <property type="match status" value="1"/>
</dbReference>
<dbReference type="Gene3D" id="3.40.50.12780">
    <property type="entry name" value="N-terminal domain of ligase-like"/>
    <property type="match status" value="1"/>
</dbReference>
<dbReference type="HAMAP" id="MF_01123">
    <property type="entry name" value="Ac_CoA_synth"/>
    <property type="match status" value="1"/>
</dbReference>
<dbReference type="InterPro" id="IPR011904">
    <property type="entry name" value="Ac_CoA_lig"/>
</dbReference>
<dbReference type="InterPro" id="IPR032387">
    <property type="entry name" value="ACAS_N"/>
</dbReference>
<dbReference type="InterPro" id="IPR025110">
    <property type="entry name" value="AMP-bd_C"/>
</dbReference>
<dbReference type="InterPro" id="IPR045851">
    <property type="entry name" value="AMP-bd_C_sf"/>
</dbReference>
<dbReference type="InterPro" id="IPR020845">
    <property type="entry name" value="AMP-binding_CS"/>
</dbReference>
<dbReference type="InterPro" id="IPR000873">
    <property type="entry name" value="AMP-dep_synth/lig_dom"/>
</dbReference>
<dbReference type="InterPro" id="IPR042099">
    <property type="entry name" value="ANL_N_sf"/>
</dbReference>
<dbReference type="NCBIfam" id="TIGR02188">
    <property type="entry name" value="Ac_CoA_lig_AcsA"/>
    <property type="match status" value="1"/>
</dbReference>
<dbReference type="NCBIfam" id="NF001208">
    <property type="entry name" value="PRK00174.1"/>
    <property type="match status" value="1"/>
</dbReference>
<dbReference type="PANTHER" id="PTHR24095">
    <property type="entry name" value="ACETYL-COENZYME A SYNTHETASE"/>
    <property type="match status" value="1"/>
</dbReference>
<dbReference type="PANTHER" id="PTHR24095:SF243">
    <property type="entry name" value="ACETYL-COENZYME A SYNTHETASE"/>
    <property type="match status" value="1"/>
</dbReference>
<dbReference type="Pfam" id="PF16177">
    <property type="entry name" value="ACAS_N"/>
    <property type="match status" value="1"/>
</dbReference>
<dbReference type="Pfam" id="PF00501">
    <property type="entry name" value="AMP-binding"/>
    <property type="match status" value="1"/>
</dbReference>
<dbReference type="Pfam" id="PF13193">
    <property type="entry name" value="AMP-binding_C"/>
    <property type="match status" value="1"/>
</dbReference>
<dbReference type="SUPFAM" id="SSF56801">
    <property type="entry name" value="Acetyl-CoA synthetase-like"/>
    <property type="match status" value="1"/>
</dbReference>
<dbReference type="PROSITE" id="PS00455">
    <property type="entry name" value="AMP_BINDING"/>
    <property type="match status" value="1"/>
</dbReference>
<gene>
    <name evidence="1" type="primary">acsA</name>
    <name type="ordered locus">VV3133</name>
</gene>
<organism>
    <name type="scientific">Vibrio vulnificus (strain YJ016)</name>
    <dbReference type="NCBI Taxonomy" id="196600"/>
    <lineage>
        <taxon>Bacteria</taxon>
        <taxon>Pseudomonadati</taxon>
        <taxon>Pseudomonadota</taxon>
        <taxon>Gammaproteobacteria</taxon>
        <taxon>Vibrionales</taxon>
        <taxon>Vibrionaceae</taxon>
        <taxon>Vibrio</taxon>
    </lineage>
</organism>
<sequence>MSEAHIYPVKENIKAHTHADNDTYLAMYQQSVTDPEGFWSEHGKIVDWIKPFTKVKQTSFDTGHVDIRWFEDGTLNVSANCIDRHLAERGDDVAIIWEGDNPADDKTLTYNELYTEVCRFSNALKEQGVRKGDVVCLYMPMVPEAAVAMLACTRIGAVHTIVFGGFSPEALAGRIIDSDAKVVITADEGVRGGRAVPLKKNVDEALTNPEVKTISKVVVFKRTGGNIDWHEHRDVWWHEATAKVSDVCPPEEMKAEDPLFILYTSGSTGKPKGVLHTTGGYLVYATMTFKYVFDYQPGETFWCTADVGWITGHTYLVYGPLANGAKTILFEGVPNYPNTSRMSEVVDKHQVNILYTAPTAIRALMAKGNEAIEGTDRSSLRIMGSVGEPINPEAWEWYYKTIGNEKSPIVDTWWQTETGGILITPLPGATALKPGSATRPFFGVQPALVDNMGNVIEDQAAEGNLVILDSWPGQMRTVYGDHERFEQTYFSTFKGMYFTGDGARRDEDGYYWITGRVDDVLNVSGHRMGTAEIESALVAHPKIAEAAIVGIPHDIKGQAIYAYVTLNAGEYPTAELHKEVKDWVRKEIGPIATPDVLHWTDALPKTRSGKIMRRILRKIATGDTSNLGDTSTLADPSVVDKLIAEKAELV</sequence>
<accession>Q7MGU3</accession>
<keyword id="KW-0007">Acetylation</keyword>
<keyword id="KW-0067">ATP-binding</keyword>
<keyword id="KW-0436">Ligase</keyword>
<keyword id="KW-0460">Magnesium</keyword>
<keyword id="KW-0479">Metal-binding</keyword>
<keyword id="KW-0547">Nucleotide-binding</keyword>
<proteinExistence type="inferred from homology"/>